<proteinExistence type="inferred from homology"/>
<evidence type="ECO:0000255" key="1">
    <source>
        <dbReference type="HAMAP-Rule" id="MF_00102"/>
    </source>
</evidence>
<evidence type="ECO:0000305" key="2"/>
<name>DAPB_STACT</name>
<dbReference type="EC" id="1.17.1.8" evidence="1"/>
<dbReference type="EMBL" id="AM295250">
    <property type="protein sequence ID" value="CAL27948.1"/>
    <property type="molecule type" value="Genomic_DNA"/>
</dbReference>
<dbReference type="RefSeq" id="WP_015900289.1">
    <property type="nucleotide sequence ID" value="NC_012121.1"/>
</dbReference>
<dbReference type="SMR" id="B9DP24"/>
<dbReference type="GeneID" id="93793464"/>
<dbReference type="KEGG" id="sca:SCA_1040"/>
<dbReference type="eggNOG" id="COG0289">
    <property type="taxonomic scope" value="Bacteria"/>
</dbReference>
<dbReference type="HOGENOM" id="CLU_047479_2_2_9"/>
<dbReference type="OrthoDB" id="9790352at2"/>
<dbReference type="BioCyc" id="SCAR396513:SCA_RS05210-MONOMER"/>
<dbReference type="UniPathway" id="UPA00034">
    <property type="reaction ID" value="UER00018"/>
</dbReference>
<dbReference type="Proteomes" id="UP000000444">
    <property type="component" value="Chromosome"/>
</dbReference>
<dbReference type="GO" id="GO:0005829">
    <property type="term" value="C:cytosol"/>
    <property type="evidence" value="ECO:0007669"/>
    <property type="project" value="TreeGrafter"/>
</dbReference>
<dbReference type="GO" id="GO:0008839">
    <property type="term" value="F:4-hydroxy-tetrahydrodipicolinate reductase"/>
    <property type="evidence" value="ECO:0007669"/>
    <property type="project" value="UniProtKB-EC"/>
</dbReference>
<dbReference type="GO" id="GO:0051287">
    <property type="term" value="F:NAD binding"/>
    <property type="evidence" value="ECO:0007669"/>
    <property type="project" value="UniProtKB-UniRule"/>
</dbReference>
<dbReference type="GO" id="GO:0050661">
    <property type="term" value="F:NADP binding"/>
    <property type="evidence" value="ECO:0007669"/>
    <property type="project" value="UniProtKB-UniRule"/>
</dbReference>
<dbReference type="GO" id="GO:0016726">
    <property type="term" value="F:oxidoreductase activity, acting on CH or CH2 groups, NAD or NADP as acceptor"/>
    <property type="evidence" value="ECO:0007669"/>
    <property type="project" value="UniProtKB-UniRule"/>
</dbReference>
<dbReference type="GO" id="GO:0019877">
    <property type="term" value="P:diaminopimelate biosynthetic process"/>
    <property type="evidence" value="ECO:0007669"/>
    <property type="project" value="UniProtKB-UniRule"/>
</dbReference>
<dbReference type="GO" id="GO:0009089">
    <property type="term" value="P:lysine biosynthetic process via diaminopimelate"/>
    <property type="evidence" value="ECO:0007669"/>
    <property type="project" value="UniProtKB-UniRule"/>
</dbReference>
<dbReference type="FunFam" id="3.30.360.10:FF:000009">
    <property type="entry name" value="4-hydroxy-tetrahydrodipicolinate reductase"/>
    <property type="match status" value="1"/>
</dbReference>
<dbReference type="Gene3D" id="3.30.360.10">
    <property type="entry name" value="Dihydrodipicolinate Reductase, domain 2"/>
    <property type="match status" value="1"/>
</dbReference>
<dbReference type="Gene3D" id="3.40.50.720">
    <property type="entry name" value="NAD(P)-binding Rossmann-like Domain"/>
    <property type="match status" value="1"/>
</dbReference>
<dbReference type="HAMAP" id="MF_00102">
    <property type="entry name" value="DapB"/>
    <property type="match status" value="1"/>
</dbReference>
<dbReference type="InterPro" id="IPR022663">
    <property type="entry name" value="DapB_C"/>
</dbReference>
<dbReference type="InterPro" id="IPR000846">
    <property type="entry name" value="DapB_N"/>
</dbReference>
<dbReference type="InterPro" id="IPR022664">
    <property type="entry name" value="DapB_N_CS"/>
</dbReference>
<dbReference type="InterPro" id="IPR023940">
    <property type="entry name" value="DHDPR_bac"/>
</dbReference>
<dbReference type="InterPro" id="IPR036291">
    <property type="entry name" value="NAD(P)-bd_dom_sf"/>
</dbReference>
<dbReference type="NCBIfam" id="TIGR00036">
    <property type="entry name" value="dapB"/>
    <property type="match status" value="1"/>
</dbReference>
<dbReference type="PANTHER" id="PTHR20836:SF7">
    <property type="entry name" value="4-HYDROXY-TETRAHYDRODIPICOLINATE REDUCTASE"/>
    <property type="match status" value="1"/>
</dbReference>
<dbReference type="PANTHER" id="PTHR20836">
    <property type="entry name" value="DIHYDRODIPICOLINATE REDUCTASE"/>
    <property type="match status" value="1"/>
</dbReference>
<dbReference type="Pfam" id="PF05173">
    <property type="entry name" value="DapB_C"/>
    <property type="match status" value="1"/>
</dbReference>
<dbReference type="Pfam" id="PF01113">
    <property type="entry name" value="DapB_N"/>
    <property type="match status" value="1"/>
</dbReference>
<dbReference type="PIRSF" id="PIRSF000161">
    <property type="entry name" value="DHPR"/>
    <property type="match status" value="1"/>
</dbReference>
<dbReference type="SUPFAM" id="SSF55347">
    <property type="entry name" value="Glyceraldehyde-3-phosphate dehydrogenase-like, C-terminal domain"/>
    <property type="match status" value="1"/>
</dbReference>
<dbReference type="SUPFAM" id="SSF51735">
    <property type="entry name" value="NAD(P)-binding Rossmann-fold domains"/>
    <property type="match status" value="1"/>
</dbReference>
<dbReference type="PROSITE" id="PS01298">
    <property type="entry name" value="DAPB"/>
    <property type="match status" value="1"/>
</dbReference>
<accession>B9DP24</accession>
<organism>
    <name type="scientific">Staphylococcus carnosus (strain TM300)</name>
    <dbReference type="NCBI Taxonomy" id="396513"/>
    <lineage>
        <taxon>Bacteria</taxon>
        <taxon>Bacillati</taxon>
        <taxon>Bacillota</taxon>
        <taxon>Bacilli</taxon>
        <taxon>Bacillales</taxon>
        <taxon>Staphylococcaceae</taxon>
        <taxon>Staphylococcus</taxon>
    </lineage>
</organism>
<sequence length="242" mass="27011">MKILLIGYGAMNQRVARLAEEQGHEITGIIVPDKNNNYPYPTFEHISDAEGADVAIDFSNPELLLPLLDEDFELPLVVATTGEKEKITEKLEELSQKMPVFFSANMSYGIHVLTKLLEVAVPLLEGYDIELIEAHHNKKVDAPSGTLVKLYDVIKELKDNVNPVYDRHEKNEKRQPDDIGISAIRGGTIVGEHDVLFAGVDETIELTHRAQSKDIFANGALKAAERLVTKPKGYYTFDNINN</sequence>
<gene>
    <name evidence="1" type="primary">dapB</name>
    <name type="ordered locus">Sca_1040</name>
</gene>
<comment type="function">
    <text evidence="1">Catalyzes the conversion of 4-hydroxy-tetrahydrodipicolinate (HTPA) to tetrahydrodipicolinate.</text>
</comment>
<comment type="catalytic activity">
    <reaction evidence="1">
        <text>(S)-2,3,4,5-tetrahydrodipicolinate + NAD(+) + H2O = (2S,4S)-4-hydroxy-2,3,4,5-tetrahydrodipicolinate + NADH + H(+)</text>
        <dbReference type="Rhea" id="RHEA:35323"/>
        <dbReference type="ChEBI" id="CHEBI:15377"/>
        <dbReference type="ChEBI" id="CHEBI:15378"/>
        <dbReference type="ChEBI" id="CHEBI:16845"/>
        <dbReference type="ChEBI" id="CHEBI:57540"/>
        <dbReference type="ChEBI" id="CHEBI:57945"/>
        <dbReference type="ChEBI" id="CHEBI:67139"/>
        <dbReference type="EC" id="1.17.1.8"/>
    </reaction>
</comment>
<comment type="catalytic activity">
    <reaction evidence="1">
        <text>(S)-2,3,4,5-tetrahydrodipicolinate + NADP(+) + H2O = (2S,4S)-4-hydroxy-2,3,4,5-tetrahydrodipicolinate + NADPH + H(+)</text>
        <dbReference type="Rhea" id="RHEA:35331"/>
        <dbReference type="ChEBI" id="CHEBI:15377"/>
        <dbReference type="ChEBI" id="CHEBI:15378"/>
        <dbReference type="ChEBI" id="CHEBI:16845"/>
        <dbReference type="ChEBI" id="CHEBI:57783"/>
        <dbReference type="ChEBI" id="CHEBI:58349"/>
        <dbReference type="ChEBI" id="CHEBI:67139"/>
        <dbReference type="EC" id="1.17.1.8"/>
    </reaction>
</comment>
<comment type="pathway">
    <text evidence="1">Amino-acid biosynthesis; L-lysine biosynthesis via DAP pathway; (S)-tetrahydrodipicolinate from L-aspartate: step 4/4.</text>
</comment>
<comment type="subcellular location">
    <subcellularLocation>
        <location evidence="1">Cytoplasm</location>
    </subcellularLocation>
</comment>
<comment type="similarity">
    <text evidence="1">Belongs to the DapB family.</text>
</comment>
<comment type="caution">
    <text evidence="2">Was originally thought to be a dihydrodipicolinate reductase (DHDPR), catalyzing the conversion of dihydrodipicolinate to tetrahydrodipicolinate. However, it was shown in E.coli that the substrate of the enzymatic reaction is not dihydrodipicolinate (DHDP) but in fact (2S,4S)-4-hydroxy-2,3,4,5-tetrahydrodipicolinic acid (HTPA), the product released by the DapA-catalyzed reaction.</text>
</comment>
<feature type="chain" id="PRO_1000189755" description="4-hydroxy-tetrahydrodipicolinate reductase">
    <location>
        <begin position="1"/>
        <end position="242"/>
    </location>
</feature>
<feature type="active site" description="Proton donor/acceptor" evidence="1">
    <location>
        <position position="135"/>
    </location>
</feature>
<feature type="active site" description="Proton donor" evidence="1">
    <location>
        <position position="139"/>
    </location>
</feature>
<feature type="binding site" evidence="1">
    <location>
        <begin position="79"/>
        <end position="81"/>
    </location>
    <ligand>
        <name>NAD(+)</name>
        <dbReference type="ChEBI" id="CHEBI:57540"/>
    </ligand>
</feature>
<feature type="binding site" evidence="1">
    <location>
        <begin position="103"/>
        <end position="106"/>
    </location>
    <ligand>
        <name>NAD(+)</name>
        <dbReference type="ChEBI" id="CHEBI:57540"/>
    </ligand>
</feature>
<feature type="binding site" evidence="1">
    <location>
        <position position="136"/>
    </location>
    <ligand>
        <name>(S)-2,3,4,5-tetrahydrodipicolinate</name>
        <dbReference type="ChEBI" id="CHEBI:16845"/>
    </ligand>
</feature>
<feature type="binding site" evidence="1">
    <location>
        <begin position="145"/>
        <end position="146"/>
    </location>
    <ligand>
        <name>(S)-2,3,4,5-tetrahydrodipicolinate</name>
        <dbReference type="ChEBI" id="CHEBI:16845"/>
    </ligand>
</feature>
<protein>
    <recommendedName>
        <fullName evidence="1">4-hydroxy-tetrahydrodipicolinate reductase</fullName>
        <shortName evidence="1">HTPA reductase</shortName>
        <ecNumber evidence="1">1.17.1.8</ecNumber>
    </recommendedName>
</protein>
<reference key="1">
    <citation type="journal article" date="2009" name="Appl. Environ. Microbiol.">
        <title>Genome analysis of the meat starter culture bacterium Staphylococcus carnosus TM300.</title>
        <authorList>
            <person name="Rosenstein R."/>
            <person name="Nerz C."/>
            <person name="Biswas L."/>
            <person name="Resch A."/>
            <person name="Raddatz G."/>
            <person name="Schuster S.C."/>
            <person name="Goetz F."/>
        </authorList>
    </citation>
    <scope>NUCLEOTIDE SEQUENCE [LARGE SCALE GENOMIC DNA]</scope>
    <source>
        <strain>TM300</strain>
    </source>
</reference>
<keyword id="KW-0028">Amino-acid biosynthesis</keyword>
<keyword id="KW-0963">Cytoplasm</keyword>
<keyword id="KW-0220">Diaminopimelate biosynthesis</keyword>
<keyword id="KW-0457">Lysine biosynthesis</keyword>
<keyword id="KW-0520">NAD</keyword>
<keyword id="KW-0521">NADP</keyword>
<keyword id="KW-0560">Oxidoreductase</keyword>
<keyword id="KW-1185">Reference proteome</keyword>